<proteinExistence type="evidence at transcript level"/>
<comment type="function">
    <text evidence="2">Kinase that can phosphorylate various inositol polyphosphate such as Ins(3,4,5,6)P4 or Ins(1,3,4)P3 and participates in phytic acid biosynthesis in developing seeds. Phytic acid is the primary storage form of phosphorus in cereal grains and other plant seeds.</text>
</comment>
<comment type="catalytic activity">
    <reaction evidence="9">
        <text>1D-myo-inositol 3,4,5,6-tetrakisphosphate + ATP = 1D-myo-inositol 1,3,4,5,6-pentakisphosphate + ADP + H(+)</text>
        <dbReference type="Rhea" id="RHEA:12452"/>
        <dbReference type="ChEBI" id="CHEBI:15378"/>
        <dbReference type="ChEBI" id="CHEBI:30616"/>
        <dbReference type="ChEBI" id="CHEBI:57539"/>
        <dbReference type="ChEBI" id="CHEBI:57733"/>
        <dbReference type="ChEBI" id="CHEBI:456216"/>
        <dbReference type="EC" id="2.7.1.134"/>
    </reaction>
</comment>
<comment type="catalytic activity">
    <reaction evidence="9">
        <text>1D-myo-inositol 1,3,4-trisphosphate + ATP = 1D-myo-inositol 1,3,4,5-tetrakisphosphate + ADP + H(+)</text>
        <dbReference type="Rhea" id="RHEA:13253"/>
        <dbReference type="ChEBI" id="CHEBI:15378"/>
        <dbReference type="ChEBI" id="CHEBI:30616"/>
        <dbReference type="ChEBI" id="CHEBI:57895"/>
        <dbReference type="ChEBI" id="CHEBI:58414"/>
        <dbReference type="ChEBI" id="CHEBI:456216"/>
        <dbReference type="EC" id="2.7.1.159"/>
    </reaction>
</comment>
<comment type="catalytic activity">
    <reaction evidence="9">
        <text>1D-myo-inositol 1,3,4-trisphosphate + ATP = 1D-myo-inositol 1,3,4,6-tetrakisphosphate + ADP + H(+)</text>
        <dbReference type="Rhea" id="RHEA:20940"/>
        <dbReference type="ChEBI" id="CHEBI:15378"/>
        <dbReference type="ChEBI" id="CHEBI:30616"/>
        <dbReference type="ChEBI" id="CHEBI:57660"/>
        <dbReference type="ChEBI" id="CHEBI:58414"/>
        <dbReference type="ChEBI" id="CHEBI:456216"/>
        <dbReference type="EC" id="2.7.1.159"/>
    </reaction>
</comment>
<comment type="cofactor">
    <cofactor evidence="1">
        <name>Mg(2+)</name>
        <dbReference type="ChEBI" id="CHEBI:18420"/>
    </cofactor>
    <text evidence="1">Binds 2 magnesium ions per subunit.</text>
</comment>
<comment type="subunit">
    <text evidence="1">Monomer.</text>
</comment>
<comment type="tissue specificity">
    <text evidence="5">Highly expressed in embryos and at lower levels in roots, leaves, flowers and anthers.</text>
</comment>
<comment type="induction">
    <text evidence="6">By drought stress.</text>
</comment>
<comment type="similarity">
    <text evidence="9">Belongs to the ITPK1 family.</text>
</comment>
<comment type="sequence caution" evidence="9">
    <conflict type="erroneous initiation">
        <sequence resource="EMBL-CDS" id="BAD34407"/>
    </conflict>
    <text>Truncated N-terminus.</text>
</comment>
<comment type="sequence caution" evidence="9">
    <conflict type="erroneous initiation">
        <sequence resource="EMBL-CDS" id="BAD54694"/>
    </conflict>
    <text>Truncated N-terminus.</text>
</comment>
<organism>
    <name type="scientific">Oryza sativa subsp. japonica</name>
    <name type="common">Rice</name>
    <dbReference type="NCBI Taxonomy" id="39947"/>
    <lineage>
        <taxon>Eukaryota</taxon>
        <taxon>Viridiplantae</taxon>
        <taxon>Streptophyta</taxon>
        <taxon>Embryophyta</taxon>
        <taxon>Tracheophyta</taxon>
        <taxon>Spermatophyta</taxon>
        <taxon>Magnoliopsida</taxon>
        <taxon>Liliopsida</taxon>
        <taxon>Poales</taxon>
        <taxon>Poaceae</taxon>
        <taxon>BOP clade</taxon>
        <taxon>Oryzoideae</taxon>
        <taxon>Oryzeae</taxon>
        <taxon>Oryzinae</taxon>
        <taxon>Oryza</taxon>
        <taxon>Oryza sativa</taxon>
    </lineage>
</organism>
<gene>
    <name type="primary">ITPK6</name>
    <name evidence="12" type="ordered locus">Os09g0518700</name>
    <name evidence="9" type="ordered locus">LOC_Os09g34300</name>
    <name evidence="11" type="ORF">OSJNOa211K08.2</name>
    <name evidence="10" type="ORF">P0498F03.7</name>
</gene>
<accession>Q0J0B2</accession>
<accession>A0A0P0XQ65</accession>
<accession>Q69IU4</accession>
<keyword id="KW-0067">ATP-binding</keyword>
<keyword id="KW-0418">Kinase</keyword>
<keyword id="KW-0460">Magnesium</keyword>
<keyword id="KW-0479">Metal-binding</keyword>
<keyword id="KW-0547">Nucleotide-binding</keyword>
<keyword id="KW-1185">Reference proteome</keyword>
<keyword id="KW-0808">Transferase</keyword>
<sequence>MPSMRVTTDTWPRRAAQEPLLLLLLRSSLMKSASLQALNPNRAMAAMGRSVRVVLDSSVLLDPSGVTAEEEEVVVALRPGAEALLRRLRYSNLRVAICHPEGLPTNESGFLEKTAKLYSFGYMPLTSPSGSNLLNELMLEWSGTNFCFYVTSGVHEGLLSELQNHNWEVIAMGNEDVIKNSGVIHISMLQELLITLATSIKKEIGNSSAFVVGYVMKQSREEDFAKRGAFPIYPSKNDLIFVPLSFELPLASQLQEVDLVLHKITDEIINIDPNSSISFPKGISFSPGMSEIIRFVEEHCDFCVIDPFKNIYPLLDRIQIQEILIRLEGLSAEGRPKLRAPCFLKIESFCGSELQKQLAEAKLSFPLIVKPQVACGVADAHNMALIFKIEEFSNLSVPLPAILQEYIDHGSKIFKFYAIGDKIFHAIKNSMPNASHLKSSSGGKPLTFNSLKTLPVATKEQLLQNEVQDSKLLDINLVEEAAKLLKELLGLTIFGFDVVVQESSGDHVIVDLNYLPSFKEVPDNVAMPAFWDAIKQSYESRKQMTQT</sequence>
<reference key="1">
    <citation type="journal article" date="2005" name="Nature">
        <title>The map-based sequence of the rice genome.</title>
        <authorList>
            <consortium name="International rice genome sequencing project (IRGSP)"/>
        </authorList>
    </citation>
    <scope>NUCLEOTIDE SEQUENCE [LARGE SCALE GENOMIC DNA]</scope>
    <source>
        <strain>cv. Nipponbare</strain>
    </source>
</reference>
<reference key="2">
    <citation type="journal article" date="2008" name="Nucleic Acids Res.">
        <title>The rice annotation project database (RAP-DB): 2008 update.</title>
        <authorList>
            <consortium name="The rice annotation project (RAP)"/>
        </authorList>
    </citation>
    <scope>GENOME REANNOTATION</scope>
    <source>
        <strain>cv. Nipponbare</strain>
    </source>
</reference>
<reference key="3">
    <citation type="journal article" date="2013" name="Rice">
        <title>Improvement of the Oryza sativa Nipponbare reference genome using next generation sequence and optical map data.</title>
        <authorList>
            <person name="Kawahara Y."/>
            <person name="de la Bastide M."/>
            <person name="Hamilton J.P."/>
            <person name="Kanamori H."/>
            <person name="McCombie W.R."/>
            <person name="Ouyang S."/>
            <person name="Schwartz D.C."/>
            <person name="Tanaka T."/>
            <person name="Wu J."/>
            <person name="Zhou S."/>
            <person name="Childs K.L."/>
            <person name="Davidson R.M."/>
            <person name="Lin H."/>
            <person name="Quesada-Ocampo L."/>
            <person name="Vaillancourt B."/>
            <person name="Sakai H."/>
            <person name="Lee S.S."/>
            <person name="Kim J."/>
            <person name="Numa H."/>
            <person name="Itoh T."/>
            <person name="Buell C.R."/>
            <person name="Matsumoto T."/>
        </authorList>
    </citation>
    <scope>GENOME REANNOTATION</scope>
    <source>
        <strain>cv. Nipponbare</strain>
    </source>
</reference>
<reference key="4">
    <citation type="journal article" date="2003" name="Science">
        <title>Collection, mapping, and annotation of over 28,000 cDNA clones from japonica rice.</title>
        <authorList>
            <consortium name="The rice full-length cDNA consortium"/>
        </authorList>
    </citation>
    <scope>NUCLEOTIDE SEQUENCE [LARGE SCALE MRNA]</scope>
    <source>
        <strain>cv. Nipponbare</strain>
    </source>
</reference>
<reference key="5">
    <citation type="journal article" date="2007" name="Gene">
        <title>Expression pattern of inositol phosphate-related enzymes in rice (Oryza sativa L.): implications for the phytic acid biosynthetic pathway.</title>
        <authorList>
            <person name="Suzuki M."/>
            <person name="Tanaka K."/>
            <person name="Kuwano M."/>
            <person name="Yoshida K.T."/>
        </authorList>
    </citation>
    <scope>TISSUE SPECIFICITY</scope>
    <scope>GENE FAMILY</scope>
    <scope>NOMENCLATURE</scope>
</reference>
<reference key="6">
    <citation type="journal article" date="2011" name="Plant Mol. Biol.">
        <title>Characterization of an inositol 1,3,4-trisphosphate 5/6-kinase gene that is essential for drought and salt stress responses in rice.</title>
        <authorList>
            <person name="Du H."/>
            <person name="Liu L."/>
            <person name="You L."/>
            <person name="Yang M."/>
            <person name="He Y."/>
            <person name="Li X."/>
            <person name="Xiong L."/>
        </authorList>
    </citation>
    <scope>INDUCTION</scope>
    <scope>GENE FAMILY</scope>
    <scope>NOMENCLATURE</scope>
</reference>
<evidence type="ECO:0000250" key="1">
    <source>
        <dbReference type="UniProtKB" id="Q13572"/>
    </source>
</evidence>
<evidence type="ECO:0000250" key="2">
    <source>
        <dbReference type="UniProtKB" id="Q84Y01"/>
    </source>
</evidence>
<evidence type="ECO:0000250" key="3">
    <source>
        <dbReference type="UniProtKB" id="Q9XYQ1"/>
    </source>
</evidence>
<evidence type="ECO:0000255" key="4">
    <source>
        <dbReference type="PROSITE-ProRule" id="PRU00409"/>
    </source>
</evidence>
<evidence type="ECO:0000269" key="5">
    <source>
    </source>
</evidence>
<evidence type="ECO:0000269" key="6">
    <source>
    </source>
</evidence>
<evidence type="ECO:0000303" key="7">
    <source>
    </source>
</evidence>
<evidence type="ECO:0000303" key="8">
    <source>
    </source>
</evidence>
<evidence type="ECO:0000305" key="9"/>
<evidence type="ECO:0000312" key="10">
    <source>
        <dbReference type="EMBL" id="BAD34407.1"/>
    </source>
</evidence>
<evidence type="ECO:0000312" key="11">
    <source>
        <dbReference type="EMBL" id="BAD54694.1"/>
    </source>
</evidence>
<evidence type="ECO:0000312" key="12">
    <source>
        <dbReference type="EMBL" id="BAF25603.1"/>
    </source>
</evidence>
<dbReference type="EC" id="2.7.1.134" evidence="9"/>
<dbReference type="EC" id="2.7.1.159" evidence="9"/>
<dbReference type="EMBL" id="AP006525">
    <property type="protein sequence ID" value="BAD34407.1"/>
    <property type="status" value="ALT_INIT"/>
    <property type="molecule type" value="Genomic_DNA"/>
</dbReference>
<dbReference type="EMBL" id="AP007254">
    <property type="protein sequence ID" value="BAD54694.1"/>
    <property type="status" value="ALT_INIT"/>
    <property type="molecule type" value="Genomic_DNA"/>
</dbReference>
<dbReference type="EMBL" id="AP008215">
    <property type="protein sequence ID" value="BAF25603.1"/>
    <property type="molecule type" value="Genomic_DNA"/>
</dbReference>
<dbReference type="EMBL" id="AP014965">
    <property type="protein sequence ID" value="BAT08993.1"/>
    <property type="molecule type" value="Genomic_DNA"/>
</dbReference>
<dbReference type="EMBL" id="AK102571">
    <property type="protein sequence ID" value="BAG95621.1"/>
    <property type="molecule type" value="mRNA"/>
</dbReference>
<dbReference type="SMR" id="Q0J0B2"/>
<dbReference type="FunCoup" id="Q0J0B2">
    <property type="interactions" value="975"/>
</dbReference>
<dbReference type="STRING" id="39947.Q0J0B2"/>
<dbReference type="PaxDb" id="39947-Q0J0B2"/>
<dbReference type="EnsemblPlants" id="Os09t0518700-01">
    <property type="protein sequence ID" value="Os09t0518700-01"/>
    <property type="gene ID" value="Os09g0518700"/>
</dbReference>
<dbReference type="Gramene" id="Os09t0518700-01">
    <property type="protein sequence ID" value="Os09t0518700-01"/>
    <property type="gene ID" value="Os09g0518700"/>
</dbReference>
<dbReference type="KEGG" id="dosa:Os09g0518700"/>
<dbReference type="eggNOG" id="ENOG502QQ6B">
    <property type="taxonomic scope" value="Eukaryota"/>
</dbReference>
<dbReference type="InParanoid" id="Q0J0B2"/>
<dbReference type="OMA" id="KMAIVFR"/>
<dbReference type="BRENDA" id="2.7.1.134">
    <property type="organism ID" value="8948"/>
</dbReference>
<dbReference type="BRENDA" id="2.7.1.159">
    <property type="organism ID" value="8948"/>
</dbReference>
<dbReference type="PlantReactome" id="R-OSA-1119434">
    <property type="pathway name" value="Phytic acid biosynthesis (lipid-independent)"/>
</dbReference>
<dbReference type="Proteomes" id="UP000000763">
    <property type="component" value="Chromosome 9"/>
</dbReference>
<dbReference type="Proteomes" id="UP000059680">
    <property type="component" value="Chromosome 9"/>
</dbReference>
<dbReference type="ExpressionAtlas" id="Q0J0B2">
    <property type="expression patterns" value="baseline and differential"/>
</dbReference>
<dbReference type="GO" id="GO:0005524">
    <property type="term" value="F:ATP binding"/>
    <property type="evidence" value="ECO:0007669"/>
    <property type="project" value="UniProtKB-KW"/>
</dbReference>
<dbReference type="GO" id="GO:0052726">
    <property type="term" value="F:inositol-1,3,4-trisphosphate 5-kinase activity"/>
    <property type="evidence" value="ECO:0000318"/>
    <property type="project" value="GO_Central"/>
</dbReference>
<dbReference type="GO" id="GO:0052725">
    <property type="term" value="F:inositol-1,3,4-trisphosphate 6-kinase activity"/>
    <property type="evidence" value="ECO:0000318"/>
    <property type="project" value="GO_Central"/>
</dbReference>
<dbReference type="GO" id="GO:0047325">
    <property type="term" value="F:inositol-3,4,5,6-tetrakisphosphate 1-kinase activity"/>
    <property type="evidence" value="ECO:0000318"/>
    <property type="project" value="GO_Central"/>
</dbReference>
<dbReference type="GO" id="GO:0000287">
    <property type="term" value="F:magnesium ion binding"/>
    <property type="evidence" value="ECO:0007669"/>
    <property type="project" value="InterPro"/>
</dbReference>
<dbReference type="GO" id="GO:0032957">
    <property type="term" value="P:inositol trisphosphate metabolic process"/>
    <property type="evidence" value="ECO:0007669"/>
    <property type="project" value="InterPro"/>
</dbReference>
<dbReference type="GO" id="GO:0010264">
    <property type="term" value="P:myo-inositol hexakisphosphate biosynthetic process"/>
    <property type="evidence" value="ECO:0007669"/>
    <property type="project" value="EnsemblPlants"/>
</dbReference>
<dbReference type="FunFam" id="3.30.470.20:FF:000047">
    <property type="entry name" value="Inositol-tetrakisphosphate 1-kinase 4"/>
    <property type="match status" value="1"/>
</dbReference>
<dbReference type="Gene3D" id="3.30.470.20">
    <property type="entry name" value="ATP-grasp fold, B domain"/>
    <property type="match status" value="1"/>
</dbReference>
<dbReference type="InterPro" id="IPR008656">
    <property type="entry name" value="Inositol_tetrakis-P_1-kinase"/>
</dbReference>
<dbReference type="InterPro" id="IPR040464">
    <property type="entry name" value="InsP(3)kin_ATP-grasp"/>
</dbReference>
<dbReference type="PANTHER" id="PTHR14217">
    <property type="entry name" value="INOSITOL-TETRAKISPHOSPHATE 1-KINASE"/>
    <property type="match status" value="1"/>
</dbReference>
<dbReference type="PANTHER" id="PTHR14217:SF1">
    <property type="entry name" value="INOSITOL-TETRAKISPHOSPHATE 1-KINASE"/>
    <property type="match status" value="1"/>
</dbReference>
<dbReference type="Pfam" id="PF05770">
    <property type="entry name" value="Ins134_P3_kin"/>
    <property type="match status" value="1"/>
</dbReference>
<dbReference type="PIRSF" id="PIRSF038163">
    <property type="entry name" value="ITPK_uncN"/>
    <property type="match status" value="1"/>
</dbReference>
<dbReference type="SUPFAM" id="SSF56059">
    <property type="entry name" value="Glutathione synthetase ATP-binding domain-like"/>
    <property type="match status" value="1"/>
</dbReference>
<protein>
    <recommendedName>
        <fullName evidence="9">Inositol-tetrakisphosphate 1-kinase 6</fullName>
        <ecNumber evidence="9">2.7.1.134</ecNumber>
    </recommendedName>
    <alternativeName>
        <fullName evidence="9">Inositol 1,3,4-trisphosphate 5/6-kinase 6</fullName>
        <shortName evidence="9">Inositol-triphosphate 5/6-kinase 6</shortName>
        <shortName evidence="9">Ins(1,3,4)P(3) 5/6-kinase 6</shortName>
        <shortName evidence="7">OsITP5/6K-6</shortName>
        <shortName evidence="8">OsITPK6</shortName>
        <ecNumber evidence="9">2.7.1.159</ecNumber>
    </alternativeName>
</protein>
<feature type="chain" id="PRO_0000431879" description="Inositol-tetrakisphosphate 1-kinase 6">
    <location>
        <begin position="1"/>
        <end position="547"/>
    </location>
</feature>
<feature type="domain" description="ATP-grasp" evidence="4">
    <location>
        <begin position="327"/>
        <end position="539"/>
    </location>
</feature>
<feature type="binding site" evidence="3">
    <location>
        <position position="263"/>
    </location>
    <ligand>
        <name>1D-myo-inositol 1,3,4-trisphosphate</name>
        <dbReference type="ChEBI" id="CHEBI:58414"/>
    </ligand>
</feature>
<feature type="binding site" evidence="1">
    <location>
        <position position="317"/>
    </location>
    <ligand>
        <name>ATP</name>
        <dbReference type="ChEBI" id="CHEBI:30616"/>
    </ligand>
</feature>
<feature type="binding site" evidence="1">
    <location>
        <position position="370"/>
    </location>
    <ligand>
        <name>ATP</name>
        <dbReference type="ChEBI" id="CHEBI:30616"/>
    </ligand>
</feature>
<feature type="binding site" evidence="3">
    <location>
        <position position="381"/>
    </location>
    <ligand>
        <name>1D-myo-inositol 1,3,4-trisphosphate</name>
        <dbReference type="ChEBI" id="CHEBI:58414"/>
    </ligand>
</feature>
<feature type="binding site" evidence="1">
    <location>
        <begin position="404"/>
        <end position="415"/>
    </location>
    <ligand>
        <name>ATP</name>
        <dbReference type="ChEBI" id="CHEBI:30616"/>
    </ligand>
</feature>
<feature type="binding site" evidence="3">
    <location>
        <position position="415"/>
    </location>
    <ligand>
        <name>1D-myo-inositol 1,3,4-trisphosphate</name>
        <dbReference type="ChEBI" id="CHEBI:58414"/>
    </ligand>
</feature>
<feature type="binding site" evidence="1">
    <location>
        <position position="430"/>
    </location>
    <ligand>
        <name>ATP</name>
        <dbReference type="ChEBI" id="CHEBI:30616"/>
    </ligand>
</feature>
<feature type="binding site" evidence="1">
    <location>
        <position position="450"/>
    </location>
    <ligand>
        <name>ATP</name>
        <dbReference type="ChEBI" id="CHEBI:30616"/>
    </ligand>
</feature>
<feature type="binding site" evidence="1">
    <location>
        <position position="497"/>
    </location>
    <ligand>
        <name>Mg(2+)</name>
        <dbReference type="ChEBI" id="CHEBI:18420"/>
        <label>1</label>
    </ligand>
</feature>
<feature type="binding site" evidence="1">
    <location>
        <position position="511"/>
    </location>
    <ligand>
        <name>Mg(2+)</name>
        <dbReference type="ChEBI" id="CHEBI:18420"/>
        <label>1</label>
    </ligand>
</feature>
<feature type="binding site" evidence="1">
    <location>
        <position position="511"/>
    </location>
    <ligand>
        <name>Mg(2+)</name>
        <dbReference type="ChEBI" id="CHEBI:18420"/>
        <label>2</label>
    </ligand>
</feature>
<feature type="binding site" evidence="3">
    <location>
        <position position="513"/>
    </location>
    <ligand>
        <name>1D-myo-inositol 1,3,4-trisphosphate</name>
        <dbReference type="ChEBI" id="CHEBI:58414"/>
    </ligand>
</feature>
<feature type="binding site" evidence="1">
    <location>
        <position position="513"/>
    </location>
    <ligand>
        <name>Mg(2+)</name>
        <dbReference type="ChEBI" id="CHEBI:18420"/>
        <label>2</label>
    </ligand>
</feature>
<feature type="binding site" evidence="3">
    <location>
        <position position="517"/>
    </location>
    <ligand>
        <name>1D-myo-inositol 1,3,4-trisphosphate</name>
        <dbReference type="ChEBI" id="CHEBI:58414"/>
    </ligand>
</feature>
<name>ITPK6_ORYSJ</name>